<feature type="chain" id="PRO_1000145709" description="Cation-efflux pump FieF">
    <location>
        <begin position="1"/>
        <end position="300"/>
    </location>
</feature>
<feature type="transmembrane region" description="Helical" evidence="1">
    <location>
        <begin position="12"/>
        <end position="32"/>
    </location>
</feature>
<feature type="transmembrane region" description="Helical" evidence="1">
    <location>
        <begin position="40"/>
        <end position="60"/>
    </location>
</feature>
<feature type="transmembrane region" description="Helical" evidence="1">
    <location>
        <begin position="82"/>
        <end position="102"/>
    </location>
</feature>
<feature type="transmembrane region" description="Helical" evidence="1">
    <location>
        <begin position="114"/>
        <end position="134"/>
    </location>
</feature>
<feature type="transmembrane region" description="Helical" evidence="1">
    <location>
        <begin position="155"/>
        <end position="175"/>
    </location>
</feature>
<feature type="transmembrane region" description="Helical" evidence="1">
    <location>
        <begin position="178"/>
        <end position="198"/>
    </location>
</feature>
<feature type="binding site" evidence="1">
    <location>
        <position position="45"/>
    </location>
    <ligand>
        <name>Zn(2+)</name>
        <dbReference type="ChEBI" id="CHEBI:29105"/>
    </ligand>
</feature>
<feature type="binding site" evidence="1">
    <location>
        <position position="49"/>
    </location>
    <ligand>
        <name>Zn(2+)</name>
        <dbReference type="ChEBI" id="CHEBI:29105"/>
    </ligand>
</feature>
<feature type="binding site" evidence="1">
    <location>
        <position position="153"/>
    </location>
    <ligand>
        <name>Zn(2+)</name>
        <dbReference type="ChEBI" id="CHEBI:29105"/>
    </ligand>
</feature>
<feature type="binding site" evidence="1">
    <location>
        <position position="157"/>
    </location>
    <ligand>
        <name>Zn(2+)</name>
        <dbReference type="ChEBI" id="CHEBI:29105"/>
    </ligand>
</feature>
<gene>
    <name evidence="1" type="primary">fieF</name>
    <name type="ordered locus">YpAngola_A0087</name>
</gene>
<comment type="function">
    <text evidence="1">Divalent metal cation transporter which exports Zn(2+), Cd(2+) and possibly Fe(2+). May be involved in zinc and iron detoxification by efflux.</text>
</comment>
<comment type="catalytic activity">
    <reaction evidence="1">
        <text>Zn(2+)(in) + H(+)(out) = Zn(2+)(out) + H(+)(in)</text>
        <dbReference type="Rhea" id="RHEA:28839"/>
        <dbReference type="ChEBI" id="CHEBI:15378"/>
        <dbReference type="ChEBI" id="CHEBI:29105"/>
    </reaction>
</comment>
<comment type="catalytic activity">
    <reaction evidence="1">
        <text>Cd(2+)(in) + H(+)(out) = Cd(2+)(out) + H(+)(in)</text>
        <dbReference type="Rhea" id="RHEA:28739"/>
        <dbReference type="ChEBI" id="CHEBI:15378"/>
        <dbReference type="ChEBI" id="CHEBI:48775"/>
    </reaction>
</comment>
<comment type="catalytic activity">
    <reaction evidence="1">
        <text>Fe(2+)(in) + H(+)(out) = Fe(2+)(out) + H(+)(in)</text>
        <dbReference type="Rhea" id="RHEA:29439"/>
        <dbReference type="ChEBI" id="CHEBI:15378"/>
        <dbReference type="ChEBI" id="CHEBI:29033"/>
    </reaction>
</comment>
<comment type="subunit">
    <text evidence="1">Homodimer.</text>
</comment>
<comment type="subcellular location">
    <subcellularLocation>
        <location evidence="1">Cell inner membrane</location>
        <topology evidence="1">Multi-pass membrane protein</topology>
    </subcellularLocation>
</comment>
<comment type="similarity">
    <text evidence="1">Belongs to the cation diffusion facilitator (CDF) transporter (TC 2.A.4) family. FieF subfamily.</text>
</comment>
<proteinExistence type="inferred from homology"/>
<protein>
    <recommendedName>
        <fullName evidence="1">Cation-efflux pump FieF</fullName>
    </recommendedName>
</protein>
<sequence>MDPQYARWVKAAALSATALASILLIIKIFAWWHTGSVSLLAALVDSLVDLAASLTNLFVVRYSLQPADEEHTFGHGKAESLAALAQSMFISGSALFLFLTGFRHLASPEPLQDPSIGIGVTLVALFSTLILVTFQRWVVRKTHSQAIRADMLHYQSDVLMNGAILIALALSWYGFRRADALFALGIGVYILYSALRMGYEAVQSLLDRALPDDERQQIIDIVTSWPGVIGAHDLRTRRSGQTRFIQLHLEMEDMMPLMEAHVLAEQVEHALLYRFPGADVLIHQDPCSVVPKERHAHWEL</sequence>
<organism>
    <name type="scientific">Yersinia pestis bv. Antiqua (strain Angola)</name>
    <dbReference type="NCBI Taxonomy" id="349746"/>
    <lineage>
        <taxon>Bacteria</taxon>
        <taxon>Pseudomonadati</taxon>
        <taxon>Pseudomonadota</taxon>
        <taxon>Gammaproteobacteria</taxon>
        <taxon>Enterobacterales</taxon>
        <taxon>Yersiniaceae</taxon>
        <taxon>Yersinia</taxon>
    </lineage>
</organism>
<keyword id="KW-0997">Cell inner membrane</keyword>
<keyword id="KW-1003">Cell membrane</keyword>
<keyword id="KW-0406">Ion transport</keyword>
<keyword id="KW-0408">Iron</keyword>
<keyword id="KW-0410">Iron transport</keyword>
<keyword id="KW-0472">Membrane</keyword>
<keyword id="KW-0479">Metal-binding</keyword>
<keyword id="KW-0812">Transmembrane</keyword>
<keyword id="KW-1133">Transmembrane helix</keyword>
<keyword id="KW-0813">Transport</keyword>
<keyword id="KW-0862">Zinc</keyword>
<keyword id="KW-0864">Zinc transport</keyword>
<accession>A9R6A2</accession>
<dbReference type="EMBL" id="CP000901">
    <property type="protein sequence ID" value="ABX84901.1"/>
    <property type="molecule type" value="Genomic_DNA"/>
</dbReference>
<dbReference type="RefSeq" id="WP_002208967.1">
    <property type="nucleotide sequence ID" value="NZ_CP009935.1"/>
</dbReference>
<dbReference type="SMR" id="A9R6A2"/>
<dbReference type="GeneID" id="57974515"/>
<dbReference type="KEGG" id="ypg:YpAngola_A0087"/>
<dbReference type="PATRIC" id="fig|349746.12.peg.1031"/>
<dbReference type="GO" id="GO:0005886">
    <property type="term" value="C:plasma membrane"/>
    <property type="evidence" value="ECO:0007669"/>
    <property type="project" value="UniProtKB-SubCell"/>
</dbReference>
<dbReference type="GO" id="GO:0015086">
    <property type="term" value="F:cadmium ion transmembrane transporter activity"/>
    <property type="evidence" value="ECO:0007669"/>
    <property type="project" value="UniProtKB-UniRule"/>
</dbReference>
<dbReference type="GO" id="GO:0015093">
    <property type="term" value="F:ferrous iron transmembrane transporter activity"/>
    <property type="evidence" value="ECO:0007669"/>
    <property type="project" value="TreeGrafter"/>
</dbReference>
<dbReference type="GO" id="GO:0046872">
    <property type="term" value="F:metal ion binding"/>
    <property type="evidence" value="ECO:0007669"/>
    <property type="project" value="UniProtKB-KW"/>
</dbReference>
<dbReference type="GO" id="GO:0015341">
    <property type="term" value="F:zinc efflux antiporter activity"/>
    <property type="evidence" value="ECO:0007669"/>
    <property type="project" value="TreeGrafter"/>
</dbReference>
<dbReference type="GO" id="GO:0006882">
    <property type="term" value="P:intracellular zinc ion homeostasis"/>
    <property type="evidence" value="ECO:0007669"/>
    <property type="project" value="TreeGrafter"/>
</dbReference>
<dbReference type="FunFam" id="1.20.1510.10:FF:000001">
    <property type="entry name" value="Ferrous-iron efflux pump FieF"/>
    <property type="match status" value="1"/>
</dbReference>
<dbReference type="FunFam" id="3.30.70.1350:FF:000002">
    <property type="entry name" value="Ferrous-iron efflux pump FieF"/>
    <property type="match status" value="1"/>
</dbReference>
<dbReference type="Gene3D" id="1.20.1510.10">
    <property type="entry name" value="Cation efflux protein transmembrane domain"/>
    <property type="match status" value="1"/>
</dbReference>
<dbReference type="Gene3D" id="3.30.70.1350">
    <property type="entry name" value="Cation efflux protein, cytoplasmic domain"/>
    <property type="match status" value="1"/>
</dbReference>
<dbReference type="HAMAP" id="MF_01425">
    <property type="entry name" value="Cation_efflux_FieF"/>
    <property type="match status" value="1"/>
</dbReference>
<dbReference type="InterPro" id="IPR002524">
    <property type="entry name" value="Cation_efflux"/>
</dbReference>
<dbReference type="InterPro" id="IPR027470">
    <property type="entry name" value="Cation_efflux_CTD"/>
</dbReference>
<dbReference type="InterPro" id="IPR036837">
    <property type="entry name" value="Cation_efflux_CTD_sf"/>
</dbReference>
<dbReference type="InterPro" id="IPR023783">
    <property type="entry name" value="Cation_efflux_FieF"/>
</dbReference>
<dbReference type="InterPro" id="IPR027469">
    <property type="entry name" value="Cation_efflux_TMD_sf"/>
</dbReference>
<dbReference type="InterPro" id="IPR050291">
    <property type="entry name" value="CDF_Transporter"/>
</dbReference>
<dbReference type="NCBIfam" id="TIGR01297">
    <property type="entry name" value="CDF"/>
    <property type="match status" value="1"/>
</dbReference>
<dbReference type="NCBIfam" id="NF007064">
    <property type="entry name" value="PRK09509.1"/>
    <property type="match status" value="1"/>
</dbReference>
<dbReference type="PANTHER" id="PTHR43840:SF41">
    <property type="entry name" value="CATION-EFFLUX PUMP FIEF"/>
    <property type="match status" value="1"/>
</dbReference>
<dbReference type="PANTHER" id="PTHR43840">
    <property type="entry name" value="MITOCHONDRIAL METAL TRANSPORTER 1-RELATED"/>
    <property type="match status" value="1"/>
</dbReference>
<dbReference type="Pfam" id="PF01545">
    <property type="entry name" value="Cation_efflux"/>
    <property type="match status" value="1"/>
</dbReference>
<dbReference type="Pfam" id="PF16916">
    <property type="entry name" value="ZT_dimer"/>
    <property type="match status" value="1"/>
</dbReference>
<dbReference type="SUPFAM" id="SSF160240">
    <property type="entry name" value="Cation efflux protein cytoplasmic domain-like"/>
    <property type="match status" value="1"/>
</dbReference>
<dbReference type="SUPFAM" id="SSF161111">
    <property type="entry name" value="Cation efflux protein transmembrane domain-like"/>
    <property type="match status" value="1"/>
</dbReference>
<evidence type="ECO:0000255" key="1">
    <source>
        <dbReference type="HAMAP-Rule" id="MF_01425"/>
    </source>
</evidence>
<reference key="1">
    <citation type="journal article" date="2010" name="J. Bacteriol.">
        <title>Genome sequence of the deep-rooted Yersinia pestis strain Angola reveals new insights into the evolution and pangenome of the plague bacterium.</title>
        <authorList>
            <person name="Eppinger M."/>
            <person name="Worsham P.L."/>
            <person name="Nikolich M.P."/>
            <person name="Riley D.R."/>
            <person name="Sebastian Y."/>
            <person name="Mou S."/>
            <person name="Achtman M."/>
            <person name="Lindler L.E."/>
            <person name="Ravel J."/>
        </authorList>
    </citation>
    <scope>NUCLEOTIDE SEQUENCE [LARGE SCALE GENOMIC DNA]</scope>
    <source>
        <strain>Angola</strain>
    </source>
</reference>
<name>FIEF_YERPG</name>